<keyword id="KW-0238">DNA-binding</keyword>
<keyword id="KW-0413">Isomerase</keyword>
<keyword id="KW-0460">Magnesium</keyword>
<keyword id="KW-0479">Metal-binding</keyword>
<keyword id="KW-1185">Reference proteome</keyword>
<keyword id="KW-0677">Repeat</keyword>
<keyword id="KW-0799">Topoisomerase</keyword>
<keyword id="KW-0862">Zinc</keyword>
<keyword id="KW-0863">Zinc-finger</keyword>
<evidence type="ECO:0000255" key="1">
    <source>
        <dbReference type="HAMAP-Rule" id="MF_00952"/>
    </source>
</evidence>
<evidence type="ECO:0000255" key="2">
    <source>
        <dbReference type="PROSITE-ProRule" id="PRU01383"/>
    </source>
</evidence>
<evidence type="ECO:0000256" key="3">
    <source>
        <dbReference type="SAM" id="MobiDB-lite"/>
    </source>
</evidence>
<dbReference type="EC" id="5.6.2.1" evidence="1"/>
<dbReference type="EMBL" id="BA000004">
    <property type="protein sequence ID" value="BAB06186.1"/>
    <property type="molecule type" value="Genomic_DNA"/>
</dbReference>
<dbReference type="PIR" id="C83958">
    <property type="entry name" value="C83958"/>
</dbReference>
<dbReference type="RefSeq" id="WP_010898620.1">
    <property type="nucleotide sequence ID" value="NC_002570.2"/>
</dbReference>
<dbReference type="SMR" id="Q9KA23"/>
<dbReference type="STRING" id="272558.gene:10728365"/>
<dbReference type="GeneID" id="87597988"/>
<dbReference type="KEGG" id="bha:BH2467"/>
<dbReference type="eggNOG" id="COG0550">
    <property type="taxonomic scope" value="Bacteria"/>
</dbReference>
<dbReference type="HOGENOM" id="CLU_002929_4_3_9"/>
<dbReference type="OrthoDB" id="9804262at2"/>
<dbReference type="Proteomes" id="UP000001258">
    <property type="component" value="Chromosome"/>
</dbReference>
<dbReference type="GO" id="GO:0005694">
    <property type="term" value="C:chromosome"/>
    <property type="evidence" value="ECO:0007669"/>
    <property type="project" value="InterPro"/>
</dbReference>
<dbReference type="GO" id="GO:0003677">
    <property type="term" value="F:DNA binding"/>
    <property type="evidence" value="ECO:0007669"/>
    <property type="project" value="UniProtKB-KW"/>
</dbReference>
<dbReference type="GO" id="GO:0003917">
    <property type="term" value="F:DNA topoisomerase type I (single strand cut, ATP-independent) activity"/>
    <property type="evidence" value="ECO:0007669"/>
    <property type="project" value="UniProtKB-UniRule"/>
</dbReference>
<dbReference type="GO" id="GO:0008270">
    <property type="term" value="F:zinc ion binding"/>
    <property type="evidence" value="ECO:0007669"/>
    <property type="project" value="UniProtKB-KW"/>
</dbReference>
<dbReference type="GO" id="GO:0006265">
    <property type="term" value="P:DNA topological change"/>
    <property type="evidence" value="ECO:0007669"/>
    <property type="project" value="UniProtKB-UniRule"/>
</dbReference>
<dbReference type="CDD" id="cd00186">
    <property type="entry name" value="TOP1Ac"/>
    <property type="match status" value="1"/>
</dbReference>
<dbReference type="CDD" id="cd03363">
    <property type="entry name" value="TOPRIM_TopoIA_TopoI"/>
    <property type="match status" value="1"/>
</dbReference>
<dbReference type="Gene3D" id="3.40.50.140">
    <property type="match status" value="1"/>
</dbReference>
<dbReference type="Gene3D" id="3.30.65.10">
    <property type="entry name" value="Bacterial Topoisomerase I, domain 1"/>
    <property type="match status" value="2"/>
</dbReference>
<dbReference type="Gene3D" id="1.10.460.10">
    <property type="entry name" value="Topoisomerase I, domain 2"/>
    <property type="match status" value="1"/>
</dbReference>
<dbReference type="Gene3D" id="2.70.20.10">
    <property type="entry name" value="Topoisomerase I, domain 3"/>
    <property type="match status" value="1"/>
</dbReference>
<dbReference type="Gene3D" id="1.10.290.10">
    <property type="entry name" value="Topoisomerase I, domain 4"/>
    <property type="match status" value="1"/>
</dbReference>
<dbReference type="HAMAP" id="MF_00952">
    <property type="entry name" value="Topoisom_1_prok"/>
    <property type="match status" value="1"/>
</dbReference>
<dbReference type="InterPro" id="IPR000380">
    <property type="entry name" value="Topo_IA"/>
</dbReference>
<dbReference type="InterPro" id="IPR003601">
    <property type="entry name" value="Topo_IA_2"/>
</dbReference>
<dbReference type="InterPro" id="IPR023406">
    <property type="entry name" value="Topo_IA_AS"/>
</dbReference>
<dbReference type="InterPro" id="IPR013497">
    <property type="entry name" value="Topo_IA_cen"/>
</dbReference>
<dbReference type="InterPro" id="IPR013824">
    <property type="entry name" value="Topo_IA_cen_sub1"/>
</dbReference>
<dbReference type="InterPro" id="IPR013825">
    <property type="entry name" value="Topo_IA_cen_sub2"/>
</dbReference>
<dbReference type="InterPro" id="IPR013826">
    <property type="entry name" value="Topo_IA_cen_sub3"/>
</dbReference>
<dbReference type="InterPro" id="IPR023405">
    <property type="entry name" value="Topo_IA_core_domain"/>
</dbReference>
<dbReference type="InterPro" id="IPR003602">
    <property type="entry name" value="Topo_IA_DNA-bd_dom"/>
</dbReference>
<dbReference type="InterPro" id="IPR013498">
    <property type="entry name" value="Topo_IA_Znf"/>
</dbReference>
<dbReference type="InterPro" id="IPR005733">
    <property type="entry name" value="TopoI_bac-type"/>
</dbReference>
<dbReference type="InterPro" id="IPR028612">
    <property type="entry name" value="Topoisom_1_IA"/>
</dbReference>
<dbReference type="InterPro" id="IPR006171">
    <property type="entry name" value="TOPRIM_dom"/>
</dbReference>
<dbReference type="InterPro" id="IPR034149">
    <property type="entry name" value="TOPRIM_TopoI"/>
</dbReference>
<dbReference type="NCBIfam" id="TIGR01051">
    <property type="entry name" value="topA_bact"/>
    <property type="match status" value="1"/>
</dbReference>
<dbReference type="PANTHER" id="PTHR42785:SF1">
    <property type="entry name" value="DNA TOPOISOMERASE"/>
    <property type="match status" value="1"/>
</dbReference>
<dbReference type="PANTHER" id="PTHR42785">
    <property type="entry name" value="DNA TOPOISOMERASE, TYPE IA, CORE"/>
    <property type="match status" value="1"/>
</dbReference>
<dbReference type="Pfam" id="PF01131">
    <property type="entry name" value="Topoisom_bac"/>
    <property type="match status" value="1"/>
</dbReference>
<dbReference type="Pfam" id="PF01751">
    <property type="entry name" value="Toprim"/>
    <property type="match status" value="1"/>
</dbReference>
<dbReference type="Pfam" id="PF01396">
    <property type="entry name" value="Zn_ribbon_Top1"/>
    <property type="match status" value="3"/>
</dbReference>
<dbReference type="PRINTS" id="PR00417">
    <property type="entry name" value="PRTPISMRASEI"/>
</dbReference>
<dbReference type="SMART" id="SM00437">
    <property type="entry name" value="TOP1Ac"/>
    <property type="match status" value="1"/>
</dbReference>
<dbReference type="SMART" id="SM00436">
    <property type="entry name" value="TOP1Bc"/>
    <property type="match status" value="1"/>
</dbReference>
<dbReference type="SMART" id="SM00493">
    <property type="entry name" value="TOPRIM"/>
    <property type="match status" value="1"/>
</dbReference>
<dbReference type="SUPFAM" id="SSF56712">
    <property type="entry name" value="Prokaryotic type I DNA topoisomerase"/>
    <property type="match status" value="1"/>
</dbReference>
<dbReference type="SUPFAM" id="SSF57783">
    <property type="entry name" value="Zinc beta-ribbon"/>
    <property type="match status" value="1"/>
</dbReference>
<dbReference type="PROSITE" id="PS00396">
    <property type="entry name" value="TOPO_IA_1"/>
    <property type="match status" value="1"/>
</dbReference>
<dbReference type="PROSITE" id="PS52039">
    <property type="entry name" value="TOPO_IA_2"/>
    <property type="match status" value="1"/>
</dbReference>
<dbReference type="PROSITE" id="PS50880">
    <property type="entry name" value="TOPRIM"/>
    <property type="match status" value="1"/>
</dbReference>
<name>TOP1_HALH5</name>
<sequence length="690" mass="78911">MADYLVIVESPAKAKTIGKYLGKKYTVKASMGHVRDLPKSQMGVDIEDEYSPRYITIRGKGPVLKELKSAAKKVKRVYLAADPDREGEAIAWHLAHSLDIDETSECRVVFNEITKQAIKDAFKSPRPINMDLVDAQQARRVLDRLVGYNISPLLWKKVKKGLSAGRVQSVAVKMIIDREKEIQAFEPEEYWSIQGTFALDGEPFEAKFYGTNGKKVELKSEDDVNNVLAKLKGDQFHVDSVQKKERKRNPVSPFTTSSLQQEAARKLNFRAKKTMMLAQQLYEGIDLGKEGTVGLITYMRTDSTRISDTAKAETKEYIESKFGKEYAQNGTKAVKKDKKSQDAHEAIRPTSVERDPKSLKEYLSRDQLRLYKLIWERLVASQMAPAIMDTMTVDLSNEGVLFRATGSKVKFPGFMKVYIEGNDEGKKEEDRLLPNLQEGQTVTKEEIEPSQHFTQPPPRYTEARLVKTMEELGIGRPSTYAPTLDTIQKRGYVALDERRFVPTELGEIVLELMTEFFPEILDVEFTAKMEDDLDSIEEGKQQWIKIIDDFYKGFEERLKVAEEEMKEVEIKDEPTGEMCEKCGHEMVYKMGRYGKFMACSNFPDCRNTKPIVKEIGVKCPKCEKGEIVERKSKKRRVFYGCNQYPECDFVSWDKPIARSCPKCSSYLVEKRTKKQVQVQCSSCDYKEEAN</sequence>
<proteinExistence type="inferred from homology"/>
<protein>
    <recommendedName>
        <fullName evidence="1">DNA topoisomerase 1</fullName>
        <ecNumber evidence="1">5.6.2.1</ecNumber>
    </recommendedName>
    <alternativeName>
        <fullName evidence="1">DNA topoisomerase I</fullName>
    </alternativeName>
    <alternativeName>
        <fullName>Omega-protein</fullName>
    </alternativeName>
    <alternativeName>
        <fullName>Relaxing enzyme</fullName>
    </alternativeName>
    <alternativeName>
        <fullName>Swivelase</fullName>
    </alternativeName>
    <alternativeName>
        <fullName>Untwisting enzyme</fullName>
    </alternativeName>
</protein>
<feature type="chain" id="PRO_0000145141" description="DNA topoisomerase 1">
    <location>
        <begin position="1"/>
        <end position="690"/>
    </location>
</feature>
<feature type="domain" description="Toprim" evidence="1">
    <location>
        <begin position="3"/>
        <end position="121"/>
    </location>
</feature>
<feature type="domain" description="Topo IA-type catalytic" evidence="2">
    <location>
        <begin position="129"/>
        <end position="558"/>
    </location>
</feature>
<feature type="zinc finger region" description="C4-type 1">
    <location>
        <begin position="579"/>
        <end position="605"/>
    </location>
</feature>
<feature type="zinc finger region" description="C4-type 2">
    <location>
        <begin position="619"/>
        <end position="647"/>
    </location>
</feature>
<feature type="zinc finger region" description="C4-type 3">
    <location>
        <begin position="660"/>
        <end position="683"/>
    </location>
</feature>
<feature type="region of interest" description="Interaction with DNA" evidence="1">
    <location>
        <begin position="163"/>
        <end position="168"/>
    </location>
</feature>
<feature type="region of interest" description="Disordered" evidence="3">
    <location>
        <begin position="329"/>
        <end position="354"/>
    </location>
</feature>
<feature type="compositionally biased region" description="Basic and acidic residues" evidence="3">
    <location>
        <begin position="339"/>
        <end position="354"/>
    </location>
</feature>
<feature type="active site" description="O-(5'-phospho-DNA)-tyrosine intermediate" evidence="2">
    <location>
        <position position="298"/>
    </location>
</feature>
<feature type="binding site" evidence="1">
    <location>
        <position position="9"/>
    </location>
    <ligand>
        <name>Mg(2+)</name>
        <dbReference type="ChEBI" id="CHEBI:18420"/>
        <note>catalytic</note>
    </ligand>
</feature>
<feature type="binding site" evidence="1">
    <location>
        <position position="82"/>
    </location>
    <ligand>
        <name>Mg(2+)</name>
        <dbReference type="ChEBI" id="CHEBI:18420"/>
        <note>catalytic</note>
    </ligand>
</feature>
<feature type="site" description="Interaction with DNA" evidence="1">
    <location>
        <position position="33"/>
    </location>
</feature>
<feature type="site" description="Interaction with DNA" evidence="1">
    <location>
        <position position="139"/>
    </location>
</feature>
<feature type="site" description="Interaction with DNA" evidence="1">
    <location>
        <position position="140"/>
    </location>
</feature>
<feature type="site" description="Interaction with DNA" evidence="1">
    <location>
        <position position="143"/>
    </location>
</feature>
<feature type="site" description="Interaction with DNA" evidence="1">
    <location>
        <position position="148"/>
    </location>
</feature>
<feature type="site" description="Interaction with DNA" evidence="1">
    <location>
        <position position="155"/>
    </location>
</feature>
<feature type="site" description="Interaction with DNA" evidence="1">
    <location>
        <position position="300"/>
    </location>
</feature>
<feature type="site" description="Interaction with DNA" evidence="1">
    <location>
        <position position="490"/>
    </location>
</feature>
<gene>
    <name evidence="1" type="primary">topA</name>
    <name type="ordered locus">BH2467</name>
</gene>
<comment type="function">
    <text evidence="1">Releases the supercoiling and torsional tension of DNA, which is introduced during the DNA replication and transcription, by transiently cleaving and rejoining one strand of the DNA duplex. Introduces a single-strand break via transesterification at a target site in duplex DNA. The scissile phosphodiester is attacked by the catalytic tyrosine of the enzyme, resulting in the formation of a DNA-(5'-phosphotyrosyl)-enzyme intermediate and the expulsion of a 3'-OH DNA strand. The free DNA strand then undergoes passage around the unbroken strand, thus removing DNA supercoils. Finally, in the religation step, the DNA 3'-OH attacks the covalent intermediate to expel the active-site tyrosine and restore the DNA phosphodiester backbone.</text>
</comment>
<comment type="catalytic activity">
    <reaction evidence="1">
        <text>ATP-independent breakage of single-stranded DNA, followed by passage and rejoining.</text>
        <dbReference type="EC" id="5.6.2.1"/>
    </reaction>
</comment>
<comment type="cofactor">
    <cofactor evidence="1">
        <name>Mg(2+)</name>
        <dbReference type="ChEBI" id="CHEBI:18420"/>
    </cofactor>
</comment>
<comment type="subunit">
    <text evidence="1">Monomer.</text>
</comment>
<comment type="similarity">
    <text evidence="1">Belongs to the type IA topoisomerase family.</text>
</comment>
<accession>Q9KA23</accession>
<reference key="1">
    <citation type="journal article" date="2000" name="Nucleic Acids Res.">
        <title>Complete genome sequence of the alkaliphilic bacterium Bacillus halodurans and genomic sequence comparison with Bacillus subtilis.</title>
        <authorList>
            <person name="Takami H."/>
            <person name="Nakasone K."/>
            <person name="Takaki Y."/>
            <person name="Maeno G."/>
            <person name="Sasaki R."/>
            <person name="Masui N."/>
            <person name="Fuji F."/>
            <person name="Hirama C."/>
            <person name="Nakamura Y."/>
            <person name="Ogasawara N."/>
            <person name="Kuhara S."/>
            <person name="Horikoshi K."/>
        </authorList>
    </citation>
    <scope>NUCLEOTIDE SEQUENCE [LARGE SCALE GENOMIC DNA]</scope>
    <source>
        <strain>ATCC BAA-125 / DSM 18197 / FERM 7344 / JCM 9153 / C-125</strain>
    </source>
</reference>
<organism>
    <name type="scientific">Halalkalibacterium halodurans (strain ATCC BAA-125 / DSM 18197 / FERM 7344 / JCM 9153 / C-125)</name>
    <name type="common">Bacillus halodurans</name>
    <dbReference type="NCBI Taxonomy" id="272558"/>
    <lineage>
        <taxon>Bacteria</taxon>
        <taxon>Bacillati</taxon>
        <taxon>Bacillota</taxon>
        <taxon>Bacilli</taxon>
        <taxon>Bacillales</taxon>
        <taxon>Bacillaceae</taxon>
        <taxon>Halalkalibacterium (ex Joshi et al. 2022)</taxon>
    </lineage>
</organism>